<comment type="function">
    <text evidence="2">Phosphatase that converts adenosine 3'-phosphate 5'-phosphosulfate (PAPS) to adenosine 5'-phosphosulfate (APS) and 3'(2')-phosphoadenosine 5'-phosphate (PAP) to AMP. Is also able to hydrolyze inositol 1,4-bisphosphate and inositol 1,3,4-trisphosphate.</text>
</comment>
<comment type="catalytic activity">
    <reaction evidence="2">
        <text>3'-phosphoadenylyl sulfate + H2O = adenosine 5'-phosphosulfate + phosphate</text>
        <dbReference type="Rhea" id="RHEA:77639"/>
        <dbReference type="ChEBI" id="CHEBI:15377"/>
        <dbReference type="ChEBI" id="CHEBI:43474"/>
        <dbReference type="ChEBI" id="CHEBI:58243"/>
        <dbReference type="ChEBI" id="CHEBI:58339"/>
        <dbReference type="EC" id="3.1.3.7"/>
    </reaction>
    <physiologicalReaction direction="left-to-right" evidence="2">
        <dbReference type="Rhea" id="RHEA:77640"/>
    </physiologicalReaction>
</comment>
<comment type="catalytic activity">
    <reaction evidence="2">
        <text>adenosine 3',5'-bisphosphate + H2O = AMP + phosphate</text>
        <dbReference type="Rhea" id="RHEA:10040"/>
        <dbReference type="ChEBI" id="CHEBI:15377"/>
        <dbReference type="ChEBI" id="CHEBI:43474"/>
        <dbReference type="ChEBI" id="CHEBI:58343"/>
        <dbReference type="ChEBI" id="CHEBI:456215"/>
        <dbReference type="EC" id="3.1.3.7"/>
    </reaction>
    <physiologicalReaction direction="left-to-right" evidence="2">
        <dbReference type="Rhea" id="RHEA:10041"/>
    </physiologicalReaction>
</comment>
<comment type="catalytic activity">
    <reaction evidence="2">
        <text>adenosine 2',5'-bisphosphate + H2O = AMP + phosphate</text>
        <dbReference type="Rhea" id="RHEA:77643"/>
        <dbReference type="ChEBI" id="CHEBI:15377"/>
        <dbReference type="ChEBI" id="CHEBI:43474"/>
        <dbReference type="ChEBI" id="CHEBI:194156"/>
        <dbReference type="ChEBI" id="CHEBI:456215"/>
        <dbReference type="EC" id="3.1.3.7"/>
    </reaction>
    <physiologicalReaction direction="left-to-right" evidence="2">
        <dbReference type="Rhea" id="RHEA:77644"/>
    </physiologicalReaction>
</comment>
<comment type="catalytic activity">
    <reaction evidence="2">
        <text>1D-myo-inositol 1,4-bisphosphate + H2O = 1D-myo-inositol 4-phosphate + phosphate</text>
        <dbReference type="Rhea" id="RHEA:15553"/>
        <dbReference type="ChEBI" id="CHEBI:15377"/>
        <dbReference type="ChEBI" id="CHEBI:43474"/>
        <dbReference type="ChEBI" id="CHEBI:58282"/>
        <dbReference type="ChEBI" id="CHEBI:58469"/>
        <dbReference type="EC" id="3.1.3.57"/>
    </reaction>
    <physiologicalReaction direction="left-to-right" evidence="2">
        <dbReference type="Rhea" id="RHEA:15554"/>
    </physiologicalReaction>
</comment>
<comment type="catalytic activity">
    <reaction evidence="2">
        <text>1D-myo-inositol 1,3,4-trisphosphate + H2O = 1D-myo-inositol 3,4-bisphosphate + phosphate</text>
        <dbReference type="Rhea" id="RHEA:70319"/>
        <dbReference type="ChEBI" id="CHEBI:15377"/>
        <dbReference type="ChEBI" id="CHEBI:43474"/>
        <dbReference type="ChEBI" id="CHEBI:58414"/>
        <dbReference type="ChEBI" id="CHEBI:83241"/>
    </reaction>
    <physiologicalReaction direction="left-to-right" evidence="2">
        <dbReference type="Rhea" id="RHEA:70320"/>
    </physiologicalReaction>
</comment>
<comment type="cofactor">
    <cofactor evidence="2">
        <name>Mg(2+)</name>
        <dbReference type="ChEBI" id="CHEBI:18420"/>
    </cofactor>
</comment>
<comment type="similarity">
    <text evidence="3">Belongs to the inositol monophosphatase superfamily.</text>
</comment>
<gene>
    <name type="ORF">DDB_G0268652</name>
</gene>
<proteinExistence type="inferred from homology"/>
<sequence>MSLCNLAKIRSVAIKAVEKACIACLDIQKQLISEDTINKKDQSPVTVGDYTVQALVINELLKGLDEEYPIIAEEDSKTLSSQKDVESKVLSFFNRYSNESFVESQLSSLLDKGNKKKDLNSSNRWWTLDPIDGTLGFLRKDQYAVALALMEDNKPILGILGCPNLPVSKGSTEKGCIFVGLKNKGSFMIKLSNLDQEEPIKVSNQSDPTKAIFTESFVSRGFGHELNQKISNSMGVTAEPLKIDSQCKYAMVARGDSDCYLRLTQLDYKECIWDHAAGHIIVEEAGGIVTDFKKQQLDYSKGFKLENNVGIVCSNKLLNDSLFDSIKKSIQF</sequence>
<evidence type="ECO:0000250" key="1">
    <source>
        <dbReference type="UniProtKB" id="P32179"/>
    </source>
</evidence>
<evidence type="ECO:0000250" key="2">
    <source>
        <dbReference type="UniProtKB" id="Q42546"/>
    </source>
</evidence>
<evidence type="ECO:0000305" key="3"/>
<accession>Q55F34</accession>
<keyword id="KW-0378">Hydrolase</keyword>
<keyword id="KW-0460">Magnesium</keyword>
<keyword id="KW-0479">Metal-binding</keyword>
<keyword id="KW-0511">Multifunctional enzyme</keyword>
<keyword id="KW-0547">Nucleotide-binding</keyword>
<keyword id="KW-1185">Reference proteome</keyword>
<dbReference type="EC" id="3.1.3.7" evidence="2"/>
<dbReference type="EC" id="3.1.3.57" evidence="2"/>
<dbReference type="EMBL" id="AAFI02000004">
    <property type="protein sequence ID" value="EAL72915.1"/>
    <property type="molecule type" value="Genomic_DNA"/>
</dbReference>
<dbReference type="RefSeq" id="XP_646836.1">
    <property type="nucleotide sequence ID" value="XM_641744.1"/>
</dbReference>
<dbReference type="SMR" id="Q55F34"/>
<dbReference type="FunCoup" id="Q55F34">
    <property type="interactions" value="38"/>
</dbReference>
<dbReference type="STRING" id="44689.Q55F34"/>
<dbReference type="PaxDb" id="44689-DDB0238884"/>
<dbReference type="EnsemblProtists" id="EAL72915">
    <property type="protein sequence ID" value="EAL72915"/>
    <property type="gene ID" value="DDB_G0268652"/>
</dbReference>
<dbReference type="GeneID" id="8616518"/>
<dbReference type="KEGG" id="ddi:DDB_G0268652"/>
<dbReference type="dictyBase" id="DDB_G0268652">
    <property type="gene designation" value="ippB"/>
</dbReference>
<dbReference type="VEuPathDB" id="AmoebaDB:DDB_G0268652"/>
<dbReference type="eggNOG" id="KOG1528">
    <property type="taxonomic scope" value="Eukaryota"/>
</dbReference>
<dbReference type="HOGENOM" id="CLU_033446_2_1_1"/>
<dbReference type="InParanoid" id="Q55F34"/>
<dbReference type="OMA" id="MSYQQER"/>
<dbReference type="PhylomeDB" id="Q55F34"/>
<dbReference type="PRO" id="PR:Q55F34"/>
<dbReference type="Proteomes" id="UP000002195">
    <property type="component" value="Chromosome 1"/>
</dbReference>
<dbReference type="GO" id="GO:0008441">
    <property type="term" value="F:3'(2'),5'-bisphosphate nucleotidase activity"/>
    <property type="evidence" value="ECO:0000318"/>
    <property type="project" value="GO_Central"/>
</dbReference>
<dbReference type="GO" id="GO:0004441">
    <property type="term" value="F:inositol-1,4-bisphosphate 1-phosphatase activity"/>
    <property type="evidence" value="ECO:0007669"/>
    <property type="project" value="UniProtKB-EC"/>
</dbReference>
<dbReference type="GO" id="GO:0046872">
    <property type="term" value="F:metal ion binding"/>
    <property type="evidence" value="ECO:0007669"/>
    <property type="project" value="UniProtKB-KW"/>
</dbReference>
<dbReference type="GO" id="GO:0000166">
    <property type="term" value="F:nucleotide binding"/>
    <property type="evidence" value="ECO:0007669"/>
    <property type="project" value="UniProtKB-KW"/>
</dbReference>
<dbReference type="GO" id="GO:0046854">
    <property type="term" value="P:phosphatidylinositol phosphate biosynthetic process"/>
    <property type="evidence" value="ECO:0007669"/>
    <property type="project" value="InterPro"/>
</dbReference>
<dbReference type="GO" id="GO:0000103">
    <property type="term" value="P:sulfate assimilation"/>
    <property type="evidence" value="ECO:0000318"/>
    <property type="project" value="GO_Central"/>
</dbReference>
<dbReference type="CDD" id="cd01517">
    <property type="entry name" value="PAP_phosphatase"/>
    <property type="match status" value="1"/>
</dbReference>
<dbReference type="FunFam" id="3.30.540.10:FF:000059">
    <property type="entry name" value="Bisphosphate nucleotidase"/>
    <property type="match status" value="1"/>
</dbReference>
<dbReference type="FunFam" id="3.40.190.80:FF:000003">
    <property type="entry name" value="PAP-specific phosphatase HAL2-like"/>
    <property type="match status" value="1"/>
</dbReference>
<dbReference type="Gene3D" id="3.40.190.80">
    <property type="match status" value="1"/>
</dbReference>
<dbReference type="Gene3D" id="3.30.540.10">
    <property type="entry name" value="Fructose-1,6-Bisphosphatase, subunit A, domain 1"/>
    <property type="match status" value="1"/>
</dbReference>
<dbReference type="InterPro" id="IPR006239">
    <property type="entry name" value="DPNP"/>
</dbReference>
<dbReference type="InterPro" id="IPR020583">
    <property type="entry name" value="Inositol_monoP_metal-BS"/>
</dbReference>
<dbReference type="InterPro" id="IPR051090">
    <property type="entry name" value="Inositol_monoP_superfamily"/>
</dbReference>
<dbReference type="InterPro" id="IPR000760">
    <property type="entry name" value="Inositol_monophosphatase-like"/>
</dbReference>
<dbReference type="InterPro" id="IPR020550">
    <property type="entry name" value="Inositol_monophosphatase_CS"/>
</dbReference>
<dbReference type="NCBIfam" id="TIGR01330">
    <property type="entry name" value="bisphos_HAL2"/>
    <property type="match status" value="1"/>
</dbReference>
<dbReference type="PANTHER" id="PTHR43200:SF6">
    <property type="entry name" value="3'(2'),5'-BISPHOSPHATE NUCLEOTIDASE"/>
    <property type="match status" value="1"/>
</dbReference>
<dbReference type="PANTHER" id="PTHR43200">
    <property type="entry name" value="PHOSPHATASE"/>
    <property type="match status" value="1"/>
</dbReference>
<dbReference type="Pfam" id="PF00459">
    <property type="entry name" value="Inositol_P"/>
    <property type="match status" value="1"/>
</dbReference>
<dbReference type="PRINTS" id="PR00377">
    <property type="entry name" value="IMPHPHTASES"/>
</dbReference>
<dbReference type="SUPFAM" id="SSF56655">
    <property type="entry name" value="Carbohydrate phosphatase"/>
    <property type="match status" value="1"/>
</dbReference>
<dbReference type="PROSITE" id="PS00629">
    <property type="entry name" value="IMP_1"/>
    <property type="match status" value="1"/>
</dbReference>
<dbReference type="PROSITE" id="PS00630">
    <property type="entry name" value="IMP_2"/>
    <property type="match status" value="1"/>
</dbReference>
<name>DPNP_DICDI</name>
<organism>
    <name type="scientific">Dictyostelium discoideum</name>
    <name type="common">Social amoeba</name>
    <dbReference type="NCBI Taxonomy" id="44689"/>
    <lineage>
        <taxon>Eukaryota</taxon>
        <taxon>Amoebozoa</taxon>
        <taxon>Evosea</taxon>
        <taxon>Eumycetozoa</taxon>
        <taxon>Dictyostelia</taxon>
        <taxon>Dictyosteliales</taxon>
        <taxon>Dictyosteliaceae</taxon>
        <taxon>Dictyostelium</taxon>
    </lineage>
</organism>
<reference key="1">
    <citation type="journal article" date="2005" name="Nature">
        <title>The genome of the social amoeba Dictyostelium discoideum.</title>
        <authorList>
            <person name="Eichinger L."/>
            <person name="Pachebat J.A."/>
            <person name="Gloeckner G."/>
            <person name="Rajandream M.A."/>
            <person name="Sucgang R."/>
            <person name="Berriman M."/>
            <person name="Song J."/>
            <person name="Olsen R."/>
            <person name="Szafranski K."/>
            <person name="Xu Q."/>
            <person name="Tunggal B."/>
            <person name="Kummerfeld S."/>
            <person name="Madera M."/>
            <person name="Konfortov B.A."/>
            <person name="Rivero F."/>
            <person name="Bankier A.T."/>
            <person name="Lehmann R."/>
            <person name="Hamlin N."/>
            <person name="Davies R."/>
            <person name="Gaudet P."/>
            <person name="Fey P."/>
            <person name="Pilcher K."/>
            <person name="Chen G."/>
            <person name="Saunders D."/>
            <person name="Sodergren E.J."/>
            <person name="Davis P."/>
            <person name="Kerhornou A."/>
            <person name="Nie X."/>
            <person name="Hall N."/>
            <person name="Anjard C."/>
            <person name="Hemphill L."/>
            <person name="Bason N."/>
            <person name="Farbrother P."/>
            <person name="Desany B."/>
            <person name="Just E."/>
            <person name="Morio T."/>
            <person name="Rost R."/>
            <person name="Churcher C.M."/>
            <person name="Cooper J."/>
            <person name="Haydock S."/>
            <person name="van Driessche N."/>
            <person name="Cronin A."/>
            <person name="Goodhead I."/>
            <person name="Muzny D.M."/>
            <person name="Mourier T."/>
            <person name="Pain A."/>
            <person name="Lu M."/>
            <person name="Harper D."/>
            <person name="Lindsay R."/>
            <person name="Hauser H."/>
            <person name="James K.D."/>
            <person name="Quiles M."/>
            <person name="Madan Babu M."/>
            <person name="Saito T."/>
            <person name="Buchrieser C."/>
            <person name="Wardroper A."/>
            <person name="Felder M."/>
            <person name="Thangavelu M."/>
            <person name="Johnson D."/>
            <person name="Knights A."/>
            <person name="Loulseged H."/>
            <person name="Mungall K.L."/>
            <person name="Oliver K."/>
            <person name="Price C."/>
            <person name="Quail M.A."/>
            <person name="Urushihara H."/>
            <person name="Hernandez J."/>
            <person name="Rabbinowitsch E."/>
            <person name="Steffen D."/>
            <person name="Sanders M."/>
            <person name="Ma J."/>
            <person name="Kohara Y."/>
            <person name="Sharp S."/>
            <person name="Simmonds M.N."/>
            <person name="Spiegler S."/>
            <person name="Tivey A."/>
            <person name="Sugano S."/>
            <person name="White B."/>
            <person name="Walker D."/>
            <person name="Woodward J.R."/>
            <person name="Winckler T."/>
            <person name="Tanaka Y."/>
            <person name="Shaulsky G."/>
            <person name="Schleicher M."/>
            <person name="Weinstock G.M."/>
            <person name="Rosenthal A."/>
            <person name="Cox E.C."/>
            <person name="Chisholm R.L."/>
            <person name="Gibbs R.A."/>
            <person name="Loomis W.F."/>
            <person name="Platzer M."/>
            <person name="Kay R.R."/>
            <person name="Williams J.G."/>
            <person name="Dear P.H."/>
            <person name="Noegel A.A."/>
            <person name="Barrell B.G."/>
            <person name="Kuspa A."/>
        </authorList>
    </citation>
    <scope>NUCLEOTIDE SEQUENCE [LARGE SCALE GENOMIC DNA]</scope>
    <source>
        <strain>AX4</strain>
    </source>
</reference>
<protein>
    <recommendedName>
        <fullName>3'(2'),5'-bisphosphate nucleotidase</fullName>
        <ecNumber evidence="2">3.1.3.7</ecNumber>
    </recommendedName>
    <alternativeName>
        <fullName>3'(2'),5-bisphosphonucleoside 3'(2')-phosphohydrolase</fullName>
    </alternativeName>
    <alternativeName>
        <fullName>DPNPase</fullName>
    </alternativeName>
    <alternativeName>
        <fullName>Inositol polyphosphate 1-phosphatase</fullName>
        <shortName>IPPase</shortName>
    </alternativeName>
    <alternativeName>
        <fullName>Inositol-1,4-bisphosphate 1-phosphatase</fullName>
        <ecNumber evidence="2">3.1.3.57</ecNumber>
    </alternativeName>
</protein>
<feature type="chain" id="PRO_0000327519" description="3'(2'),5'-bisphosphate nucleotidase">
    <location>
        <begin position="1"/>
        <end position="332"/>
    </location>
</feature>
<feature type="active site" description="Proton acceptor" evidence="1">
    <location>
        <position position="49"/>
    </location>
</feature>
<feature type="active site" description="Proton acceptor" evidence="1">
    <location>
        <position position="134"/>
    </location>
</feature>
<feature type="binding site" evidence="1">
    <location>
        <position position="73"/>
    </location>
    <ligand>
        <name>Mg(2+)</name>
        <dbReference type="ChEBI" id="CHEBI:18420"/>
        <label>1</label>
    </ligand>
</feature>
<feature type="binding site" evidence="1">
    <location>
        <position position="73"/>
    </location>
    <ligand>
        <name>Mg(2+)</name>
        <dbReference type="ChEBI" id="CHEBI:18420"/>
        <label>3</label>
    </ligand>
</feature>
<feature type="binding site" evidence="1">
    <location>
        <position position="129"/>
    </location>
    <ligand>
        <name>Mg(2+)</name>
        <dbReference type="ChEBI" id="CHEBI:18420"/>
        <label>1</label>
    </ligand>
</feature>
<feature type="binding site" evidence="1">
    <location>
        <position position="129"/>
    </location>
    <ligand>
        <name>Mg(2+)</name>
        <dbReference type="ChEBI" id="CHEBI:18420"/>
        <label>2</label>
    </ligand>
</feature>
<feature type="binding site" evidence="1">
    <location>
        <position position="131"/>
    </location>
    <ligand>
        <name>Mg(2+)</name>
        <dbReference type="ChEBI" id="CHEBI:18420"/>
        <label>1</label>
    </ligand>
</feature>
<feature type="binding site" evidence="1">
    <location>
        <position position="132"/>
    </location>
    <ligand>
        <name>Mg(2+)</name>
        <dbReference type="ChEBI" id="CHEBI:18420"/>
        <label>2</label>
    </ligand>
</feature>
<feature type="binding site" evidence="1">
    <location>
        <position position="134"/>
    </location>
    <ligand>
        <name>adenosine 3',5'-bisphosphate</name>
        <dbReference type="ChEBI" id="CHEBI:58343"/>
    </ligand>
</feature>
<feature type="binding site" evidence="1">
    <location>
        <position position="245"/>
    </location>
    <ligand>
        <name>adenosine 3',5'-bisphosphate</name>
        <dbReference type="ChEBI" id="CHEBI:58343"/>
    </ligand>
</feature>
<feature type="binding site" evidence="1">
    <location>
        <position position="245"/>
    </location>
    <ligand>
        <name>AMP</name>
        <dbReference type="ChEBI" id="CHEBI:456215"/>
    </ligand>
</feature>
<feature type="binding site" evidence="1">
    <location>
        <position position="248"/>
    </location>
    <ligand>
        <name>adenosine 3',5'-bisphosphate</name>
        <dbReference type="ChEBI" id="CHEBI:58343"/>
    </ligand>
</feature>
<feature type="binding site" evidence="1">
    <location>
        <position position="248"/>
    </location>
    <ligand>
        <name>AMP</name>
        <dbReference type="ChEBI" id="CHEBI:456215"/>
    </ligand>
</feature>
<feature type="binding site" evidence="1">
    <location>
        <position position="262"/>
    </location>
    <ligand>
        <name>adenosine 3',5'-bisphosphate</name>
        <dbReference type="ChEBI" id="CHEBI:58343"/>
    </ligand>
</feature>
<feature type="binding site" evidence="1">
    <location>
        <position position="262"/>
    </location>
    <ligand>
        <name>AMP</name>
        <dbReference type="ChEBI" id="CHEBI:456215"/>
    </ligand>
</feature>
<feature type="binding site" evidence="1">
    <location>
        <position position="274"/>
    </location>
    <ligand>
        <name>adenosine 3',5'-bisphosphate</name>
        <dbReference type="ChEBI" id="CHEBI:58343"/>
    </ligand>
</feature>
<feature type="binding site" evidence="1">
    <location>
        <position position="274"/>
    </location>
    <ligand>
        <name>AMP</name>
        <dbReference type="ChEBI" id="CHEBI:456215"/>
    </ligand>
</feature>
<feature type="binding site" evidence="1">
    <location>
        <position position="274"/>
    </location>
    <ligand>
        <name>Mg(2+)</name>
        <dbReference type="ChEBI" id="CHEBI:18420"/>
        <label>2</label>
    </ligand>
</feature>